<keyword id="KW-0025">Alternative splicing</keyword>
<keyword id="KW-0175">Coiled coil</keyword>
<keyword id="KW-0472">Membrane</keyword>
<keyword id="KW-1267">Proteomics identification</keyword>
<keyword id="KW-1185">Reference proteome</keyword>
<keyword id="KW-0812">Transmembrane</keyword>
<keyword id="KW-1133">Transmembrane helix</keyword>
<proteinExistence type="evidence at protein level"/>
<accession>Q6ZVL6</accession>
<accession>B0QYU0</accession>
<dbReference type="EMBL" id="AK124395">
    <property type="protein sequence ID" value="BAC85845.1"/>
    <property type="molecule type" value="mRNA"/>
</dbReference>
<dbReference type="EMBL" id="AL049629">
    <property type="status" value="NOT_ANNOTATED_CDS"/>
    <property type="molecule type" value="Genomic_DNA"/>
</dbReference>
<dbReference type="EMBL" id="AL049575">
    <property type="status" value="NOT_ANNOTATED_CDS"/>
    <property type="molecule type" value="Genomic_DNA"/>
</dbReference>
<dbReference type="RefSeq" id="NP_036326.2">
    <property type="nucleotide sequence ID" value="NM_012194.2"/>
</dbReference>
<dbReference type="RefSeq" id="XP_011518271.1">
    <property type="nucleotide sequence ID" value="XM_011519969.2"/>
</dbReference>
<dbReference type="BioGRID" id="117301">
    <property type="interactions" value="5"/>
</dbReference>
<dbReference type="FunCoup" id="Q6ZVL6">
    <property type="interactions" value="69"/>
</dbReference>
<dbReference type="IntAct" id="Q6ZVL6">
    <property type="interactions" value="5"/>
</dbReference>
<dbReference type="MINT" id="Q6ZVL6"/>
<dbReference type="STRING" id="9606.ENSP00000315295"/>
<dbReference type="GlyCosmos" id="Q6ZVL6">
    <property type="glycosylation" value="2 sites, 2 glycans"/>
</dbReference>
<dbReference type="GlyGen" id="Q6ZVL6">
    <property type="glycosylation" value="16 sites, 1 N-linked glycan (2 sites), 3 O-linked glycans (11 sites)"/>
</dbReference>
<dbReference type="iPTMnet" id="Q6ZVL6"/>
<dbReference type="PhosphoSitePlus" id="Q6ZVL6"/>
<dbReference type="BioMuta" id="KIAA1549L"/>
<dbReference type="DMDM" id="193806328"/>
<dbReference type="jPOST" id="Q6ZVL6"/>
<dbReference type="MassIVE" id="Q6ZVL6"/>
<dbReference type="PaxDb" id="9606-ENSP00000315295"/>
<dbReference type="PeptideAtlas" id="Q6ZVL6"/>
<dbReference type="ProteomicsDB" id="68423">
    <molecule id="Q6ZVL6-1"/>
</dbReference>
<dbReference type="ProteomicsDB" id="68424">
    <molecule id="Q6ZVL6-2"/>
</dbReference>
<dbReference type="ABCD" id="Q6ZVL6">
    <property type="antibodies" value="5 sequenced antibodies"/>
</dbReference>
<dbReference type="Antibodypedia" id="2328">
    <property type="antibodies" value="2 antibodies from 2 providers"/>
</dbReference>
<dbReference type="DNASU" id="25758"/>
<dbReference type="Ensembl" id="ENST00000321505.9">
    <molecule id="Q6ZVL6-1"/>
    <property type="protein sequence ID" value="ENSP00000315295.4"/>
    <property type="gene ID" value="ENSG00000110427.17"/>
</dbReference>
<dbReference type="GeneID" id="25758"/>
<dbReference type="KEGG" id="hsa:25758"/>
<dbReference type="UCSC" id="uc001mun.1">
    <molecule id="Q6ZVL6-1"/>
    <property type="organism name" value="human"/>
</dbReference>
<dbReference type="AGR" id="HGNC:24836"/>
<dbReference type="CTD" id="25758"/>
<dbReference type="DisGeNET" id="25758"/>
<dbReference type="GeneCards" id="KIAA1549L"/>
<dbReference type="HGNC" id="HGNC:24836">
    <property type="gene designation" value="KIAA1549L"/>
</dbReference>
<dbReference type="HPA" id="ENSG00000110427">
    <property type="expression patterns" value="Group enriched (brain, parathyroid gland)"/>
</dbReference>
<dbReference type="MIM" id="612297">
    <property type="type" value="gene"/>
</dbReference>
<dbReference type="neXtProt" id="NX_Q6ZVL6"/>
<dbReference type="OpenTargets" id="ENSG00000110427"/>
<dbReference type="PharmGKB" id="PA142672301"/>
<dbReference type="VEuPathDB" id="HostDB:ENSG00000110427"/>
<dbReference type="eggNOG" id="ENOG502QU24">
    <property type="taxonomic scope" value="Eukaryota"/>
</dbReference>
<dbReference type="GeneTree" id="ENSGT00530000063472"/>
<dbReference type="HOGENOM" id="CLU_002284_2_1_1"/>
<dbReference type="InParanoid" id="Q6ZVL6"/>
<dbReference type="OrthoDB" id="9939624at2759"/>
<dbReference type="PAN-GO" id="Q6ZVL6">
    <property type="GO annotations" value="0 GO annotations based on evolutionary models"/>
</dbReference>
<dbReference type="PhylomeDB" id="Q6ZVL6"/>
<dbReference type="TreeFam" id="TF332690"/>
<dbReference type="PathwayCommons" id="Q6ZVL6"/>
<dbReference type="SignaLink" id="Q6ZVL6"/>
<dbReference type="BioGRID-ORCS" id="25758">
    <property type="hits" value="8 hits in 1142 CRISPR screens"/>
</dbReference>
<dbReference type="CD-CODE" id="FB4E32DD">
    <property type="entry name" value="Presynaptic clusters and postsynaptic densities"/>
</dbReference>
<dbReference type="ChiTaRS" id="KIAA1549L">
    <property type="organism name" value="human"/>
</dbReference>
<dbReference type="GenomeRNAi" id="25758"/>
<dbReference type="Pharos" id="Q6ZVL6">
    <property type="development level" value="Tdark"/>
</dbReference>
<dbReference type="PRO" id="PR:Q6ZVL6"/>
<dbReference type="Proteomes" id="UP000005640">
    <property type="component" value="Chromosome 11"/>
</dbReference>
<dbReference type="RNAct" id="Q6ZVL6">
    <property type="molecule type" value="protein"/>
</dbReference>
<dbReference type="Bgee" id="ENSG00000110427">
    <property type="expression patterns" value="Expressed in middle temporal gyrus and 115 other cell types or tissues"/>
</dbReference>
<dbReference type="ExpressionAtlas" id="Q6ZVL6">
    <property type="expression patterns" value="baseline and differential"/>
</dbReference>
<dbReference type="GO" id="GO:0016020">
    <property type="term" value="C:membrane"/>
    <property type="evidence" value="ECO:0007669"/>
    <property type="project" value="UniProtKB-SubCell"/>
</dbReference>
<dbReference type="InterPro" id="IPR024606">
    <property type="entry name" value="KIAA1549"/>
</dbReference>
<dbReference type="PANTHER" id="PTHR21590">
    <property type="entry name" value="SEA DOMAIN-CONTAINING PROTEIN"/>
    <property type="match status" value="1"/>
</dbReference>
<dbReference type="PANTHER" id="PTHR21590:SF3">
    <property type="entry name" value="UPF0606 PROTEIN KIAA1549L"/>
    <property type="match status" value="1"/>
</dbReference>
<dbReference type="Pfam" id="PF12877">
    <property type="entry name" value="KIAA1549"/>
    <property type="match status" value="1"/>
</dbReference>
<feature type="chain" id="PRO_0000274780" description="UPF0606 protein KIAA1549L">
    <location>
        <begin position="1"/>
        <end position="1849"/>
    </location>
</feature>
<feature type="transmembrane region" description="Helical" evidence="1">
    <location>
        <begin position="1180"/>
        <end position="1200"/>
    </location>
</feature>
<feature type="region of interest" description="Disordered" evidence="2">
    <location>
        <begin position="1"/>
        <end position="70"/>
    </location>
</feature>
<feature type="region of interest" description="Disordered" evidence="2">
    <location>
        <begin position="142"/>
        <end position="166"/>
    </location>
</feature>
<feature type="region of interest" description="Disordered" evidence="2">
    <location>
        <begin position="213"/>
        <end position="242"/>
    </location>
</feature>
<feature type="region of interest" description="Disordered" evidence="2">
    <location>
        <begin position="529"/>
        <end position="586"/>
    </location>
</feature>
<feature type="region of interest" description="Disordered" evidence="2">
    <location>
        <begin position="1258"/>
        <end position="1338"/>
    </location>
</feature>
<feature type="region of interest" description="Disordered" evidence="2">
    <location>
        <begin position="1460"/>
        <end position="1546"/>
    </location>
</feature>
<feature type="region of interest" description="Disordered" evidence="2">
    <location>
        <begin position="1656"/>
        <end position="1679"/>
    </location>
</feature>
<feature type="region of interest" description="Disordered" evidence="2">
    <location>
        <begin position="1769"/>
        <end position="1819"/>
    </location>
</feature>
<feature type="coiled-coil region" evidence="1">
    <location>
        <begin position="958"/>
        <end position="986"/>
    </location>
</feature>
<feature type="compositionally biased region" description="Polar residues" evidence="2">
    <location>
        <begin position="1"/>
        <end position="10"/>
    </location>
</feature>
<feature type="compositionally biased region" description="Polar residues" evidence="2">
    <location>
        <begin position="529"/>
        <end position="541"/>
    </location>
</feature>
<feature type="compositionally biased region" description="Polar residues" evidence="2">
    <location>
        <begin position="552"/>
        <end position="586"/>
    </location>
</feature>
<feature type="compositionally biased region" description="Polar residues" evidence="2">
    <location>
        <begin position="1290"/>
        <end position="1319"/>
    </location>
</feature>
<feature type="compositionally biased region" description="Polar residues" evidence="2">
    <location>
        <begin position="1463"/>
        <end position="1482"/>
    </location>
</feature>
<feature type="compositionally biased region" description="Polar residues" evidence="2">
    <location>
        <begin position="1537"/>
        <end position="1546"/>
    </location>
</feature>
<feature type="compositionally biased region" description="Low complexity" evidence="2">
    <location>
        <begin position="1769"/>
        <end position="1786"/>
    </location>
</feature>
<feature type="compositionally biased region" description="Low complexity" evidence="2">
    <location>
        <begin position="1795"/>
        <end position="1809"/>
    </location>
</feature>
<feature type="splice variant" id="VSP_034445" description="In isoform 2." evidence="3">
    <original>T</original>
    <variation>TGAATNA</variation>
    <location>
        <position position="627"/>
    </location>
</feature>
<feature type="splice variant" id="VSP_034446" description="In isoform 2." evidence="3">
    <original>PVQG</original>
    <variation>QVAQ</variation>
    <location>
        <begin position="1226"/>
        <end position="1229"/>
    </location>
</feature>
<feature type="splice variant" id="VSP_034447" description="In isoform 2." evidence="3">
    <location>
        <begin position="1230"/>
        <end position="1849"/>
    </location>
</feature>
<evidence type="ECO:0000255" key="1"/>
<evidence type="ECO:0000256" key="2">
    <source>
        <dbReference type="SAM" id="MobiDB-lite"/>
    </source>
</evidence>
<evidence type="ECO:0000303" key="3">
    <source>
    </source>
</evidence>
<evidence type="ECO:0000305" key="4"/>
<sequence>MDHTASQNAQDLIGIPHLGVSGSSTKWHSELSPTEGPHSAGSSTPGFLSPMAELSHPSPPPPALGSLLQLPDGSPSWSMLEVASGPASTQQIKAGVPGRVHNGVSLPTFKNTETATHEAEPPLFQTAESGAIEMTSRKLASATANDSANPLHLSAAPENSRGPALSAEHTSSLVPSLHITTLGQEQAILSGAVPASPSTGTADFPSILTFLQPTENHASPSPVPEMPTLPAEGSDGSPPATRDLLLSSKVPNLLSTSWTFPRWKKDSVTAILGKNEEANVTIPLQAFPRKEVLSLHTVNGFVSDFSTGSVSSPIITAPRTNPLPSGPPLPSILSIQATQTVFPSLGFSSTKPEAYAAAVDHSGLPASASKQVRASPSSMDVYDSLTIGDMKKPATTDVFWSSLSAETGSLSTESIISGLQQQTNYDLNGHTISTTSWETHLAPTAPPNGLTSAADAIKSQDFKDTAGHSVTAEGFSIQDLVLGTSIEQPVQQSDMTMVGSHIDLWPTSNNNHSRDFQTAEVAYYSPTTRHSVSHPQLQLPNQPAHPLLLTSPGPTSTGSLQEMLSDGTDTGSEISSDINSSPERNASTPFQNILGYHSAAESSISTSVFPRTSSRVLRASQHPKKWTADTVSSKVQPTAAAAVTLFLRKSSPPALSAALVAKGTSSSPLAVASGPAKSSSMTTLAKNVTNKAASGPKRTPGAVHTAFPFTPTYMYARTGHTTSTHTAMQGNMDTASGLLSTTYLPRKPQAMHTGLPNPTNLEMPRASTPRPLTVTAALTSITASVKATRLPPLRAENTDAVLPAASAAVVTTGKMASNLECQMSSKLLVKTVLFLTQRRVQISESLKFSIAKGLTQALRKAFHQNDVSAHVDILEYSHNVTVGYYATKGKLVYLPAVVIEMLGVYGVSNVTADLKQHTPHLQSVAVLASPWNPQPAGYFQLKTVLQFVSQADNIQSCKFAQTMEQRLQKAFQDAERKVLNTKSNLTIQIVSTSNASQAVTLVYVVGNQSTFLNGTVASSLLSQLSAELVGFYLTYPPLTIAEPLEYPNLDISETTRDYWVITVLQGVDNSLVGLHNQSFARVMEQRLAQLFMMSQQQGRRFKRATTLGSYTVQMVKMQRVPGPKDPAELTYYTLYNGKPLLGTAAAKILSTIDSQRMALTLHHVVLLQADPVVKNPPNNLWIIAAVLAPIAVVTVIIIIITAVLCRKNKNDFKPDTMINLPQRAKPVQGFDYAKQHLGQQGADEEVIPVTQETVVLPLPIRDAPQERDVAQDGSTIKTAKSTETRKSRSPSENGSVISNESGKPSSGRRSPQNVMAQQKVTKEEARKRNVPASDEEEGAVLFDNSSKVAAEPFDTSSGSVQLIAIKPTALPMVPPTSDRSQESSAVLNGEVNKALKQKSDIEHYRNKLRLKAKRKGYYDFPAVETSKGLTERKKMYEKAPKEMEHVLDPDSELCAPFTESKNRQQMKNSVYRSRQSLNSPSPGETEMDLLVTRERPRRGIRNSGYDTEPEIIEETNIDRVPEPRGYSRSRQVKGHSETSTLSSQPSIDEVRQQMHMLLEEAFSLASAGHAGQSRHQEAYGSAQHLPYSEVVTSAPGTMTRPRAGVQWVPTYRPEMYQYSLPRPAYRFSQLPEMVMGSPPPPVPPRTGPVAVASLRRSTSDIGSKTRMAESTGPEPAQLHDSASFTQMSRGPVSVTQLDQSALNYSGNTVPAVFAIPAANRPGFTGYFIPTPPSSYRNQAWMSYAGENELPSQWADSVPLPGYIEAYPRSRYPQSSPSRLPRQYSQPANLHPSLEQAPAPSTAASQQSLAENDPSDAPLTNISTAALVKAIREEVAKLAKKQTDMFEFQV</sequence>
<reference key="1">
    <citation type="journal article" date="2004" name="Nat. Genet.">
        <title>Complete sequencing and characterization of 21,243 full-length human cDNAs.</title>
        <authorList>
            <person name="Ota T."/>
            <person name="Suzuki Y."/>
            <person name="Nishikawa T."/>
            <person name="Otsuki T."/>
            <person name="Sugiyama T."/>
            <person name="Irie R."/>
            <person name="Wakamatsu A."/>
            <person name="Hayashi K."/>
            <person name="Sato H."/>
            <person name="Nagai K."/>
            <person name="Kimura K."/>
            <person name="Makita H."/>
            <person name="Sekine M."/>
            <person name="Obayashi M."/>
            <person name="Nishi T."/>
            <person name="Shibahara T."/>
            <person name="Tanaka T."/>
            <person name="Ishii S."/>
            <person name="Yamamoto J."/>
            <person name="Saito K."/>
            <person name="Kawai Y."/>
            <person name="Isono Y."/>
            <person name="Nakamura Y."/>
            <person name="Nagahari K."/>
            <person name="Murakami K."/>
            <person name="Yasuda T."/>
            <person name="Iwayanagi T."/>
            <person name="Wagatsuma M."/>
            <person name="Shiratori A."/>
            <person name="Sudo H."/>
            <person name="Hosoiri T."/>
            <person name="Kaku Y."/>
            <person name="Kodaira H."/>
            <person name="Kondo H."/>
            <person name="Sugawara M."/>
            <person name="Takahashi M."/>
            <person name="Kanda K."/>
            <person name="Yokoi T."/>
            <person name="Furuya T."/>
            <person name="Kikkawa E."/>
            <person name="Omura Y."/>
            <person name="Abe K."/>
            <person name="Kamihara K."/>
            <person name="Katsuta N."/>
            <person name="Sato K."/>
            <person name="Tanikawa M."/>
            <person name="Yamazaki M."/>
            <person name="Ninomiya K."/>
            <person name="Ishibashi T."/>
            <person name="Yamashita H."/>
            <person name="Murakawa K."/>
            <person name="Fujimori K."/>
            <person name="Tanai H."/>
            <person name="Kimata M."/>
            <person name="Watanabe M."/>
            <person name="Hiraoka S."/>
            <person name="Chiba Y."/>
            <person name="Ishida S."/>
            <person name="Ono Y."/>
            <person name="Takiguchi S."/>
            <person name="Watanabe S."/>
            <person name="Yosida M."/>
            <person name="Hotuta T."/>
            <person name="Kusano J."/>
            <person name="Kanehori K."/>
            <person name="Takahashi-Fujii A."/>
            <person name="Hara H."/>
            <person name="Tanase T.-O."/>
            <person name="Nomura Y."/>
            <person name="Togiya S."/>
            <person name="Komai F."/>
            <person name="Hara R."/>
            <person name="Takeuchi K."/>
            <person name="Arita M."/>
            <person name="Imose N."/>
            <person name="Musashino K."/>
            <person name="Yuuki H."/>
            <person name="Oshima A."/>
            <person name="Sasaki N."/>
            <person name="Aotsuka S."/>
            <person name="Yoshikawa Y."/>
            <person name="Matsunawa H."/>
            <person name="Ichihara T."/>
            <person name="Shiohata N."/>
            <person name="Sano S."/>
            <person name="Moriya S."/>
            <person name="Momiyama H."/>
            <person name="Satoh N."/>
            <person name="Takami S."/>
            <person name="Terashima Y."/>
            <person name="Suzuki O."/>
            <person name="Nakagawa S."/>
            <person name="Senoh A."/>
            <person name="Mizoguchi H."/>
            <person name="Goto Y."/>
            <person name="Shimizu F."/>
            <person name="Wakebe H."/>
            <person name="Hishigaki H."/>
            <person name="Watanabe T."/>
            <person name="Sugiyama A."/>
            <person name="Takemoto M."/>
            <person name="Kawakami B."/>
            <person name="Yamazaki M."/>
            <person name="Watanabe K."/>
            <person name="Kumagai A."/>
            <person name="Itakura S."/>
            <person name="Fukuzumi Y."/>
            <person name="Fujimori Y."/>
            <person name="Komiyama M."/>
            <person name="Tashiro H."/>
            <person name="Tanigami A."/>
            <person name="Fujiwara T."/>
            <person name="Ono T."/>
            <person name="Yamada K."/>
            <person name="Fujii Y."/>
            <person name="Ozaki K."/>
            <person name="Hirao M."/>
            <person name="Ohmori Y."/>
            <person name="Kawabata A."/>
            <person name="Hikiji T."/>
            <person name="Kobatake N."/>
            <person name="Inagaki H."/>
            <person name="Ikema Y."/>
            <person name="Okamoto S."/>
            <person name="Okitani R."/>
            <person name="Kawakami T."/>
            <person name="Noguchi S."/>
            <person name="Itoh T."/>
            <person name="Shigeta K."/>
            <person name="Senba T."/>
            <person name="Matsumura K."/>
            <person name="Nakajima Y."/>
            <person name="Mizuno T."/>
            <person name="Morinaga M."/>
            <person name="Sasaki M."/>
            <person name="Togashi T."/>
            <person name="Oyama M."/>
            <person name="Hata H."/>
            <person name="Watanabe M."/>
            <person name="Komatsu T."/>
            <person name="Mizushima-Sugano J."/>
            <person name="Satoh T."/>
            <person name="Shirai Y."/>
            <person name="Takahashi Y."/>
            <person name="Nakagawa K."/>
            <person name="Okumura K."/>
            <person name="Nagase T."/>
            <person name="Nomura N."/>
            <person name="Kikuchi H."/>
            <person name="Masuho Y."/>
            <person name="Yamashita R."/>
            <person name="Nakai K."/>
            <person name="Yada T."/>
            <person name="Nakamura Y."/>
            <person name="Ohara O."/>
            <person name="Isogai T."/>
            <person name="Sugano S."/>
        </authorList>
    </citation>
    <scope>NUCLEOTIDE SEQUENCE [LARGE SCALE MRNA] (ISOFORM 2)</scope>
    <source>
        <tissue>Astrocyte</tissue>
    </source>
</reference>
<reference key="2">
    <citation type="journal article" date="2006" name="Nature">
        <title>Human chromosome 11 DNA sequence and analysis including novel gene identification.</title>
        <authorList>
            <person name="Taylor T.D."/>
            <person name="Noguchi H."/>
            <person name="Totoki Y."/>
            <person name="Toyoda A."/>
            <person name="Kuroki Y."/>
            <person name="Dewar K."/>
            <person name="Lloyd C."/>
            <person name="Itoh T."/>
            <person name="Takeda T."/>
            <person name="Kim D.-W."/>
            <person name="She X."/>
            <person name="Barlow K.F."/>
            <person name="Bloom T."/>
            <person name="Bruford E."/>
            <person name="Chang J.L."/>
            <person name="Cuomo C.A."/>
            <person name="Eichler E."/>
            <person name="FitzGerald M.G."/>
            <person name="Jaffe D.B."/>
            <person name="LaButti K."/>
            <person name="Nicol R."/>
            <person name="Park H.-S."/>
            <person name="Seaman C."/>
            <person name="Sougnez C."/>
            <person name="Yang X."/>
            <person name="Zimmer A.R."/>
            <person name="Zody M.C."/>
            <person name="Birren B.W."/>
            <person name="Nusbaum C."/>
            <person name="Fujiyama A."/>
            <person name="Hattori M."/>
            <person name="Rogers J."/>
            <person name="Lander E.S."/>
            <person name="Sakaki Y."/>
        </authorList>
    </citation>
    <scope>NUCLEOTIDE SEQUENCE [LARGE SCALE GENOMIC DNA]</scope>
</reference>
<comment type="subcellular location">
    <subcellularLocation>
        <location evidence="4">Membrane</location>
        <topology evidence="4">Single-pass membrane protein</topology>
    </subcellularLocation>
</comment>
<comment type="alternative products">
    <event type="alternative splicing"/>
    <isoform>
        <id>Q6ZVL6-1</id>
        <name>1</name>
        <sequence type="displayed"/>
    </isoform>
    <isoform>
        <id>Q6ZVL6-2</id>
        <name>2</name>
        <sequence type="described" ref="VSP_034445 VSP_034446 VSP_034447"/>
    </isoform>
</comment>
<comment type="similarity">
    <text evidence="4">Belongs to the UPF0606 family.</text>
</comment>
<gene>
    <name type="primary">KIAA1549L</name>
    <name type="synonym">C11orf41</name>
    <name type="synonym">C11orf69</name>
</gene>
<organism>
    <name type="scientific">Homo sapiens</name>
    <name type="common">Human</name>
    <dbReference type="NCBI Taxonomy" id="9606"/>
    <lineage>
        <taxon>Eukaryota</taxon>
        <taxon>Metazoa</taxon>
        <taxon>Chordata</taxon>
        <taxon>Craniata</taxon>
        <taxon>Vertebrata</taxon>
        <taxon>Euteleostomi</taxon>
        <taxon>Mammalia</taxon>
        <taxon>Eutheria</taxon>
        <taxon>Euarchontoglires</taxon>
        <taxon>Primates</taxon>
        <taxon>Haplorrhini</taxon>
        <taxon>Catarrhini</taxon>
        <taxon>Hominidae</taxon>
        <taxon>Homo</taxon>
    </lineage>
</organism>
<name>K154L_HUMAN</name>
<protein>
    <recommendedName>
        <fullName>UPF0606 protein KIAA1549L</fullName>
    </recommendedName>
</protein>